<comment type="function">
    <text evidence="1">Catalyzes the reversible phosphorylation of UMP to UDP.</text>
</comment>
<comment type="catalytic activity">
    <reaction evidence="1">
        <text>UMP + ATP = UDP + ADP</text>
        <dbReference type="Rhea" id="RHEA:24400"/>
        <dbReference type="ChEBI" id="CHEBI:30616"/>
        <dbReference type="ChEBI" id="CHEBI:57865"/>
        <dbReference type="ChEBI" id="CHEBI:58223"/>
        <dbReference type="ChEBI" id="CHEBI:456216"/>
        <dbReference type="EC" id="2.7.4.22"/>
    </reaction>
</comment>
<comment type="activity regulation">
    <text evidence="1">Inhibited by UTP.</text>
</comment>
<comment type="pathway">
    <text evidence="1">Pyrimidine metabolism; CTP biosynthesis via de novo pathway; UDP from UMP (UMPK route): step 1/1.</text>
</comment>
<comment type="subunit">
    <text evidence="1">Homohexamer.</text>
</comment>
<comment type="subcellular location">
    <subcellularLocation>
        <location evidence="1">Cytoplasm</location>
    </subcellularLocation>
</comment>
<comment type="similarity">
    <text evidence="1">Belongs to the UMP kinase family.</text>
</comment>
<dbReference type="EC" id="2.7.4.22" evidence="1"/>
<dbReference type="EMBL" id="CP000505">
    <property type="protein sequence ID" value="ABL77924.1"/>
    <property type="molecule type" value="Genomic_DNA"/>
</dbReference>
<dbReference type="RefSeq" id="WP_011752189.1">
    <property type="nucleotide sequence ID" value="NC_008698.1"/>
</dbReference>
<dbReference type="SMR" id="A1RXJ4"/>
<dbReference type="STRING" id="368408.Tpen_0518"/>
<dbReference type="EnsemblBacteria" id="ABL77924">
    <property type="protein sequence ID" value="ABL77924"/>
    <property type="gene ID" value="Tpen_0518"/>
</dbReference>
<dbReference type="GeneID" id="4601356"/>
<dbReference type="KEGG" id="tpe:Tpen_0518"/>
<dbReference type="eggNOG" id="arCOG00858">
    <property type="taxonomic scope" value="Archaea"/>
</dbReference>
<dbReference type="HOGENOM" id="CLU_079546_0_0_2"/>
<dbReference type="OrthoDB" id="372251at2157"/>
<dbReference type="UniPathway" id="UPA00159">
    <property type="reaction ID" value="UER00275"/>
</dbReference>
<dbReference type="Proteomes" id="UP000000641">
    <property type="component" value="Chromosome"/>
</dbReference>
<dbReference type="GO" id="GO:0005737">
    <property type="term" value="C:cytoplasm"/>
    <property type="evidence" value="ECO:0007669"/>
    <property type="project" value="UniProtKB-SubCell"/>
</dbReference>
<dbReference type="GO" id="GO:0005524">
    <property type="term" value="F:ATP binding"/>
    <property type="evidence" value="ECO:0007669"/>
    <property type="project" value="UniProtKB-KW"/>
</dbReference>
<dbReference type="GO" id="GO:0033862">
    <property type="term" value="F:UMP kinase activity"/>
    <property type="evidence" value="ECO:0007669"/>
    <property type="project" value="UniProtKB-EC"/>
</dbReference>
<dbReference type="GO" id="GO:0044210">
    <property type="term" value="P:'de novo' CTP biosynthetic process"/>
    <property type="evidence" value="ECO:0007669"/>
    <property type="project" value="UniProtKB-UniRule"/>
</dbReference>
<dbReference type="GO" id="GO:0006225">
    <property type="term" value="P:UDP biosynthetic process"/>
    <property type="evidence" value="ECO:0007669"/>
    <property type="project" value="TreeGrafter"/>
</dbReference>
<dbReference type="Gene3D" id="3.40.1160.10">
    <property type="entry name" value="Acetylglutamate kinase-like"/>
    <property type="match status" value="1"/>
</dbReference>
<dbReference type="HAMAP" id="MF_01220_A">
    <property type="entry name" value="PyrH_A"/>
    <property type="match status" value="1"/>
</dbReference>
<dbReference type="InterPro" id="IPR036393">
    <property type="entry name" value="AceGlu_kinase-like_sf"/>
</dbReference>
<dbReference type="InterPro" id="IPR001048">
    <property type="entry name" value="Asp/Glu/Uridylate_kinase"/>
</dbReference>
<dbReference type="InterPro" id="IPR011817">
    <property type="entry name" value="Uridylate_kinase"/>
</dbReference>
<dbReference type="InterPro" id="IPR011818">
    <property type="entry name" value="Uridylate_kinase_arch/spir"/>
</dbReference>
<dbReference type="NCBIfam" id="TIGR02076">
    <property type="entry name" value="pyrH_arch"/>
    <property type="match status" value="1"/>
</dbReference>
<dbReference type="PANTHER" id="PTHR42833">
    <property type="entry name" value="URIDYLATE KINASE"/>
    <property type="match status" value="1"/>
</dbReference>
<dbReference type="PANTHER" id="PTHR42833:SF4">
    <property type="entry name" value="URIDYLATE KINASE PUMPKIN, CHLOROPLASTIC"/>
    <property type="match status" value="1"/>
</dbReference>
<dbReference type="Pfam" id="PF00696">
    <property type="entry name" value="AA_kinase"/>
    <property type="match status" value="1"/>
</dbReference>
<dbReference type="PIRSF" id="PIRSF005650">
    <property type="entry name" value="Uridylate_kin"/>
    <property type="match status" value="1"/>
</dbReference>
<dbReference type="SUPFAM" id="SSF53633">
    <property type="entry name" value="Carbamate kinase-like"/>
    <property type="match status" value="1"/>
</dbReference>
<organism>
    <name type="scientific">Thermofilum pendens (strain DSM 2475 / Hrk 5)</name>
    <dbReference type="NCBI Taxonomy" id="368408"/>
    <lineage>
        <taxon>Archaea</taxon>
        <taxon>Thermoproteota</taxon>
        <taxon>Thermoprotei</taxon>
        <taxon>Thermofilales</taxon>
        <taxon>Thermofilaceae</taxon>
        <taxon>Thermofilum</taxon>
    </lineage>
</organism>
<accession>A1RXJ4</accession>
<evidence type="ECO:0000255" key="1">
    <source>
        <dbReference type="HAMAP-Rule" id="MF_01220"/>
    </source>
</evidence>
<sequence length="232" mass="25335">MGEAALAVVKLGGSLLFEDEGSLKEGYVRGFLRELREYLAESNGRVVVVVGGGRYARNYIQLGRRLGVNEGVLDYLGILVSRLNAATMYAAFYNSPPLIPETLLDVHKLLASGLRVVFMGGLQPGQSTTTTAALVAESLNGSLIIATDVEGIYTDDPKRNPAATLMERVSVEELRRMFQREQVAGEYRMIDVLSLNVIQRSKVKVFVLKGDPPGNIFRALRGERVAGTFIEA</sequence>
<name>PYRH_THEPD</name>
<gene>
    <name evidence="1" type="primary">pyrH</name>
    <name type="ordered locus">Tpen_0518</name>
</gene>
<proteinExistence type="inferred from homology"/>
<keyword id="KW-0067">ATP-binding</keyword>
<keyword id="KW-0963">Cytoplasm</keyword>
<keyword id="KW-0418">Kinase</keyword>
<keyword id="KW-0547">Nucleotide-binding</keyword>
<keyword id="KW-0665">Pyrimidine biosynthesis</keyword>
<keyword id="KW-1185">Reference proteome</keyword>
<keyword id="KW-0808">Transferase</keyword>
<protein>
    <recommendedName>
        <fullName evidence="1">Uridylate kinase</fullName>
        <shortName evidence="1">UK</shortName>
        <ecNumber evidence="1">2.7.4.22</ecNumber>
    </recommendedName>
    <alternativeName>
        <fullName evidence="1">Uridine monophosphate kinase</fullName>
        <shortName evidence="1">UMP kinase</shortName>
        <shortName evidence="1">UMPK</shortName>
    </alternativeName>
</protein>
<feature type="chain" id="PRO_0000323997" description="Uridylate kinase">
    <location>
        <begin position="1"/>
        <end position="232"/>
    </location>
</feature>
<feature type="binding site" evidence="1">
    <location>
        <begin position="13"/>
        <end position="14"/>
    </location>
    <ligand>
        <name>ATP</name>
        <dbReference type="ChEBI" id="CHEBI:30616"/>
    </ligand>
</feature>
<feature type="binding site" evidence="1">
    <location>
        <position position="52"/>
    </location>
    <ligand>
        <name>UMP</name>
        <dbReference type="ChEBI" id="CHEBI:57865"/>
    </ligand>
</feature>
<feature type="binding site" evidence="1">
    <location>
        <position position="53"/>
    </location>
    <ligand>
        <name>ATP</name>
        <dbReference type="ChEBI" id="CHEBI:30616"/>
    </ligand>
</feature>
<feature type="binding site" evidence="1">
    <location>
        <position position="57"/>
    </location>
    <ligand>
        <name>ATP</name>
        <dbReference type="ChEBI" id="CHEBI:30616"/>
    </ligand>
</feature>
<feature type="binding site" evidence="1">
    <location>
        <position position="74"/>
    </location>
    <ligand>
        <name>UMP</name>
        <dbReference type="ChEBI" id="CHEBI:57865"/>
    </ligand>
</feature>
<feature type="binding site" evidence="1">
    <location>
        <begin position="122"/>
        <end position="128"/>
    </location>
    <ligand>
        <name>UMP</name>
        <dbReference type="ChEBI" id="CHEBI:57865"/>
    </ligand>
</feature>
<feature type="binding site" evidence="1">
    <location>
        <position position="147"/>
    </location>
    <ligand>
        <name>ATP</name>
        <dbReference type="ChEBI" id="CHEBI:30616"/>
    </ligand>
</feature>
<feature type="binding site" evidence="1">
    <location>
        <position position="153"/>
    </location>
    <ligand>
        <name>ATP</name>
        <dbReference type="ChEBI" id="CHEBI:30616"/>
    </ligand>
</feature>
<feature type="binding site" evidence="1">
    <location>
        <position position="156"/>
    </location>
    <ligand>
        <name>ATP</name>
        <dbReference type="ChEBI" id="CHEBI:30616"/>
    </ligand>
</feature>
<reference key="1">
    <citation type="journal article" date="2008" name="J. Bacteriol.">
        <title>Genome sequence of Thermofilum pendens reveals an exceptional loss of biosynthetic pathways without genome reduction.</title>
        <authorList>
            <person name="Anderson I."/>
            <person name="Rodriguez J."/>
            <person name="Susanti D."/>
            <person name="Porat I."/>
            <person name="Reich C."/>
            <person name="Ulrich L.E."/>
            <person name="Elkins J.G."/>
            <person name="Mavromatis K."/>
            <person name="Lykidis A."/>
            <person name="Kim E."/>
            <person name="Thompson L.S."/>
            <person name="Nolan M."/>
            <person name="Land M."/>
            <person name="Copeland A."/>
            <person name="Lapidus A."/>
            <person name="Lucas S."/>
            <person name="Detter C."/>
            <person name="Zhulin I.B."/>
            <person name="Olsen G.J."/>
            <person name="Whitman W."/>
            <person name="Mukhopadhyay B."/>
            <person name="Bristow J."/>
            <person name="Kyrpides N."/>
        </authorList>
    </citation>
    <scope>NUCLEOTIDE SEQUENCE [LARGE SCALE GENOMIC DNA]</scope>
    <source>
        <strain>DSM 2475 / Hrk 5</strain>
    </source>
</reference>